<keyword id="KW-1003">Cell membrane</keyword>
<keyword id="KW-0325">Glycoprotein</keyword>
<keyword id="KW-0472">Membrane</keyword>
<keyword id="KW-0675">Receptor</keyword>
<keyword id="KW-1185">Reference proteome</keyword>
<keyword id="KW-0807">Transducer</keyword>
<keyword id="KW-0812">Transmembrane</keyword>
<keyword id="KW-1133">Transmembrane helix</keyword>
<dbReference type="EMBL" id="AE014296">
    <property type="protein sequence ID" value="AAF47826.3"/>
    <property type="molecule type" value="Genomic_DNA"/>
</dbReference>
<dbReference type="RefSeq" id="NP_728924.2">
    <property type="nucleotide sequence ID" value="NM_168052.3"/>
</dbReference>
<dbReference type="SMR" id="P83297"/>
<dbReference type="FunCoup" id="P83297">
    <property type="interactions" value="18"/>
</dbReference>
<dbReference type="STRING" id="7227.FBpp0073057"/>
<dbReference type="GlyCosmos" id="P83297">
    <property type="glycosylation" value="1 site, No reported glycans"/>
</dbReference>
<dbReference type="GlyGen" id="P83297">
    <property type="glycosylation" value="1 site"/>
</dbReference>
<dbReference type="PaxDb" id="7227-FBpp0073057"/>
<dbReference type="EnsemblMetazoa" id="FBtr0073201">
    <property type="protein sequence ID" value="FBpp0073057"/>
    <property type="gene ID" value="FBgn0052255"/>
</dbReference>
<dbReference type="GeneID" id="117477"/>
<dbReference type="KEGG" id="dme:Dmel_CG32255"/>
<dbReference type="AGR" id="FB:FBgn0052255"/>
<dbReference type="CTD" id="117477"/>
<dbReference type="FlyBase" id="FBgn0052255">
    <property type="gene designation" value="Gr64f"/>
</dbReference>
<dbReference type="VEuPathDB" id="VectorBase:FBgn0052255"/>
<dbReference type="eggNOG" id="ENOG502QTKP">
    <property type="taxonomic scope" value="Eukaryota"/>
</dbReference>
<dbReference type="HOGENOM" id="CLU_043581_0_0_1"/>
<dbReference type="InParanoid" id="P83297"/>
<dbReference type="OMA" id="FHEDQDL"/>
<dbReference type="OrthoDB" id="5800391at2759"/>
<dbReference type="PhylomeDB" id="P83297"/>
<dbReference type="BioGRID-ORCS" id="117477">
    <property type="hits" value="0 hits in 1 CRISPR screen"/>
</dbReference>
<dbReference type="GenomeRNAi" id="117477"/>
<dbReference type="PRO" id="PR:P83297"/>
<dbReference type="Proteomes" id="UP000000803">
    <property type="component" value="Chromosome 3L"/>
</dbReference>
<dbReference type="Bgee" id="FBgn0052255">
    <property type="expression patterns" value="Expressed in adult olfactory receptor neuron Or92a (Drosophila) in antenna and 5 other cell types or tissues"/>
</dbReference>
<dbReference type="ExpressionAtlas" id="P83297">
    <property type="expression patterns" value="baseline and differential"/>
</dbReference>
<dbReference type="GO" id="GO:0016020">
    <property type="term" value="C:membrane"/>
    <property type="evidence" value="ECO:0000303"/>
    <property type="project" value="UniProtKB"/>
</dbReference>
<dbReference type="GO" id="GO:0005886">
    <property type="term" value="C:plasma membrane"/>
    <property type="evidence" value="ECO:0000250"/>
    <property type="project" value="FlyBase"/>
</dbReference>
<dbReference type="GO" id="GO:0170023">
    <property type="term" value="F:ionotropic sweet taste receptor activity"/>
    <property type="evidence" value="ECO:0000315"/>
    <property type="project" value="FlyBase"/>
</dbReference>
<dbReference type="GO" id="GO:0015276">
    <property type="term" value="F:ligand-gated monoatomic ion channel activity"/>
    <property type="evidence" value="ECO:0000250"/>
    <property type="project" value="FlyBase"/>
</dbReference>
<dbReference type="GO" id="GO:0033041">
    <property type="term" value="F:sweet taste receptor activity"/>
    <property type="evidence" value="ECO:0000318"/>
    <property type="project" value="GO_Central"/>
</dbReference>
<dbReference type="GO" id="GO:0008527">
    <property type="term" value="F:taste receptor activity"/>
    <property type="evidence" value="ECO:0000303"/>
    <property type="project" value="UniProtKB"/>
</dbReference>
<dbReference type="GO" id="GO:0050912">
    <property type="term" value="P:detection of chemical stimulus involved in sensory perception of taste"/>
    <property type="evidence" value="ECO:0000315"/>
    <property type="project" value="FlyBase"/>
</dbReference>
<dbReference type="GO" id="GO:0034220">
    <property type="term" value="P:monoatomic ion transmembrane transport"/>
    <property type="evidence" value="ECO:0000250"/>
    <property type="project" value="FlyBase"/>
</dbReference>
<dbReference type="GO" id="GO:0050916">
    <property type="term" value="P:sensory perception of sweet taste"/>
    <property type="evidence" value="ECO:0000315"/>
    <property type="project" value="FlyBase"/>
</dbReference>
<dbReference type="GO" id="GO:0050909">
    <property type="term" value="P:sensory perception of taste"/>
    <property type="evidence" value="ECO:0000303"/>
    <property type="project" value="UniProtKB"/>
</dbReference>
<dbReference type="GO" id="GO:0007165">
    <property type="term" value="P:signal transduction"/>
    <property type="evidence" value="ECO:0007669"/>
    <property type="project" value="UniProtKB-KW"/>
</dbReference>
<dbReference type="InterPro" id="IPR009318">
    <property type="entry name" value="Gustatory_rcpt"/>
</dbReference>
<dbReference type="PANTHER" id="PTHR21421">
    <property type="entry name" value="GUSTATORY RECEPTOR"/>
    <property type="match status" value="1"/>
</dbReference>
<dbReference type="PANTHER" id="PTHR21421:SF29">
    <property type="entry name" value="GUSTATORY RECEPTOR 5A FOR TREHALOSE-RELATED"/>
    <property type="match status" value="1"/>
</dbReference>
<dbReference type="Pfam" id="PF06151">
    <property type="entry name" value="Trehalose_recp"/>
    <property type="match status" value="1"/>
</dbReference>
<dbReference type="PIRSF" id="PIRSF038981">
    <property type="entry name" value="GRP"/>
    <property type="match status" value="1"/>
</dbReference>
<accession>P83297</accession>
<accession>Q9VZJ5</accession>
<sequence length="469" mass="54576">MKILPKLERKLRRLKKRVTRTSLFRKLDLVHESARKKAFQESCETYKNQIENEYEIRNSLPKLSRSDKEAFLSDGSFHQAVGRVLLVAEFFAMMPVKGVTGKHPSDLSFSWRNIRTCFSLLFIASSLANFGLSLFKVLNNPISFNSIKPIIFRGSVLLVLIVALNLARQWPQLMMYWHTVEKDLPQYKTQLTKWKMGHTISMVMLLGMMLSFAEHILSMVSAINYASFCNRTADPIQNYFLRTNDEIFFVTSYSTTLALWGKFQNVFSTFIWNYMDLFVMIVSIGLASKFRQLNDDLRNFKGMNMAPSYWSERRIQYRNICILCDKMDDAISLITMVSFSNNLYFICVQLLRSLNTMPSVAHAVYFYFSLIFLIGRTLAVSLYSSSVHDESRLTLRYLRCVPKESWCPEVKRFTEEVISDEVALTGMKFFHLTRKLVLSVAGTIVTYELVLIQFHEDNDLWDCDQSYYS</sequence>
<protein>
    <recommendedName>
        <fullName>Gustatory receptor for sugar taste 64f</fullName>
    </recommendedName>
</protein>
<proteinExistence type="evidence at transcript level"/>
<organism>
    <name type="scientific">Drosophila melanogaster</name>
    <name type="common">Fruit fly</name>
    <dbReference type="NCBI Taxonomy" id="7227"/>
    <lineage>
        <taxon>Eukaryota</taxon>
        <taxon>Metazoa</taxon>
        <taxon>Ecdysozoa</taxon>
        <taxon>Arthropoda</taxon>
        <taxon>Hexapoda</taxon>
        <taxon>Insecta</taxon>
        <taxon>Pterygota</taxon>
        <taxon>Neoptera</taxon>
        <taxon>Endopterygota</taxon>
        <taxon>Diptera</taxon>
        <taxon>Brachycera</taxon>
        <taxon>Muscomorpha</taxon>
        <taxon>Ephydroidea</taxon>
        <taxon>Drosophilidae</taxon>
        <taxon>Drosophila</taxon>
        <taxon>Sophophora</taxon>
    </lineage>
</organism>
<evidence type="ECO:0000250" key="1"/>
<evidence type="ECO:0000255" key="2"/>
<evidence type="ECO:0000269" key="3">
    <source>
    </source>
</evidence>
<evidence type="ECO:0000269" key="4">
    <source>
    </source>
</evidence>
<evidence type="ECO:0000269" key="5">
    <source>
    </source>
</evidence>
<evidence type="ECO:0000269" key="6">
    <source>
    </source>
</evidence>
<evidence type="ECO:0000305" key="7"/>
<reference key="1">
    <citation type="journal article" date="2000" name="Science">
        <title>The genome sequence of Drosophila melanogaster.</title>
        <authorList>
            <person name="Adams M.D."/>
            <person name="Celniker S.E."/>
            <person name="Holt R.A."/>
            <person name="Evans C.A."/>
            <person name="Gocayne J.D."/>
            <person name="Amanatides P.G."/>
            <person name="Scherer S.E."/>
            <person name="Li P.W."/>
            <person name="Hoskins R.A."/>
            <person name="Galle R.F."/>
            <person name="George R.A."/>
            <person name="Lewis S.E."/>
            <person name="Richards S."/>
            <person name="Ashburner M."/>
            <person name="Henderson S.N."/>
            <person name="Sutton G.G."/>
            <person name="Wortman J.R."/>
            <person name="Yandell M.D."/>
            <person name="Zhang Q."/>
            <person name="Chen L.X."/>
            <person name="Brandon R.C."/>
            <person name="Rogers Y.-H.C."/>
            <person name="Blazej R.G."/>
            <person name="Champe M."/>
            <person name="Pfeiffer B.D."/>
            <person name="Wan K.H."/>
            <person name="Doyle C."/>
            <person name="Baxter E.G."/>
            <person name="Helt G."/>
            <person name="Nelson C.R."/>
            <person name="Miklos G.L.G."/>
            <person name="Abril J.F."/>
            <person name="Agbayani A."/>
            <person name="An H.-J."/>
            <person name="Andrews-Pfannkoch C."/>
            <person name="Baldwin D."/>
            <person name="Ballew R.M."/>
            <person name="Basu A."/>
            <person name="Baxendale J."/>
            <person name="Bayraktaroglu L."/>
            <person name="Beasley E.M."/>
            <person name="Beeson K.Y."/>
            <person name="Benos P.V."/>
            <person name="Berman B.P."/>
            <person name="Bhandari D."/>
            <person name="Bolshakov S."/>
            <person name="Borkova D."/>
            <person name="Botchan M.R."/>
            <person name="Bouck J."/>
            <person name="Brokstein P."/>
            <person name="Brottier P."/>
            <person name="Burtis K.C."/>
            <person name="Busam D.A."/>
            <person name="Butler H."/>
            <person name="Cadieu E."/>
            <person name="Center A."/>
            <person name="Chandra I."/>
            <person name="Cherry J.M."/>
            <person name="Cawley S."/>
            <person name="Dahlke C."/>
            <person name="Davenport L.B."/>
            <person name="Davies P."/>
            <person name="de Pablos B."/>
            <person name="Delcher A."/>
            <person name="Deng Z."/>
            <person name="Mays A.D."/>
            <person name="Dew I."/>
            <person name="Dietz S.M."/>
            <person name="Dodson K."/>
            <person name="Doup L.E."/>
            <person name="Downes M."/>
            <person name="Dugan-Rocha S."/>
            <person name="Dunkov B.C."/>
            <person name="Dunn P."/>
            <person name="Durbin K.J."/>
            <person name="Evangelista C.C."/>
            <person name="Ferraz C."/>
            <person name="Ferriera S."/>
            <person name="Fleischmann W."/>
            <person name="Fosler C."/>
            <person name="Gabrielian A.E."/>
            <person name="Garg N.S."/>
            <person name="Gelbart W.M."/>
            <person name="Glasser K."/>
            <person name="Glodek A."/>
            <person name="Gong F."/>
            <person name="Gorrell J.H."/>
            <person name="Gu Z."/>
            <person name="Guan P."/>
            <person name="Harris M."/>
            <person name="Harris N.L."/>
            <person name="Harvey D.A."/>
            <person name="Heiman T.J."/>
            <person name="Hernandez J.R."/>
            <person name="Houck J."/>
            <person name="Hostin D."/>
            <person name="Houston K.A."/>
            <person name="Howland T.J."/>
            <person name="Wei M.-H."/>
            <person name="Ibegwam C."/>
            <person name="Jalali M."/>
            <person name="Kalush F."/>
            <person name="Karpen G.H."/>
            <person name="Ke Z."/>
            <person name="Kennison J.A."/>
            <person name="Ketchum K.A."/>
            <person name="Kimmel B.E."/>
            <person name="Kodira C.D."/>
            <person name="Kraft C.L."/>
            <person name="Kravitz S."/>
            <person name="Kulp D."/>
            <person name="Lai Z."/>
            <person name="Lasko P."/>
            <person name="Lei Y."/>
            <person name="Levitsky A.A."/>
            <person name="Li J.H."/>
            <person name="Li Z."/>
            <person name="Liang Y."/>
            <person name="Lin X."/>
            <person name="Liu X."/>
            <person name="Mattei B."/>
            <person name="McIntosh T.C."/>
            <person name="McLeod M.P."/>
            <person name="McPherson D."/>
            <person name="Merkulov G."/>
            <person name="Milshina N.V."/>
            <person name="Mobarry C."/>
            <person name="Morris J."/>
            <person name="Moshrefi A."/>
            <person name="Mount S.M."/>
            <person name="Moy M."/>
            <person name="Murphy B."/>
            <person name="Murphy L."/>
            <person name="Muzny D.M."/>
            <person name="Nelson D.L."/>
            <person name="Nelson D.R."/>
            <person name="Nelson K.A."/>
            <person name="Nixon K."/>
            <person name="Nusskern D.R."/>
            <person name="Pacleb J.M."/>
            <person name="Palazzolo M."/>
            <person name="Pittman G.S."/>
            <person name="Pan S."/>
            <person name="Pollard J."/>
            <person name="Puri V."/>
            <person name="Reese M.G."/>
            <person name="Reinert K."/>
            <person name="Remington K."/>
            <person name="Saunders R.D.C."/>
            <person name="Scheeler F."/>
            <person name="Shen H."/>
            <person name="Shue B.C."/>
            <person name="Siden-Kiamos I."/>
            <person name="Simpson M."/>
            <person name="Skupski M.P."/>
            <person name="Smith T.J."/>
            <person name="Spier E."/>
            <person name="Spradling A.C."/>
            <person name="Stapleton M."/>
            <person name="Strong R."/>
            <person name="Sun E."/>
            <person name="Svirskas R."/>
            <person name="Tector C."/>
            <person name="Turner R."/>
            <person name="Venter E."/>
            <person name="Wang A.H."/>
            <person name="Wang X."/>
            <person name="Wang Z.-Y."/>
            <person name="Wassarman D.A."/>
            <person name="Weinstock G.M."/>
            <person name="Weissenbach J."/>
            <person name="Williams S.M."/>
            <person name="Woodage T."/>
            <person name="Worley K.C."/>
            <person name="Wu D."/>
            <person name="Yang S."/>
            <person name="Yao Q.A."/>
            <person name="Ye J."/>
            <person name="Yeh R.-F."/>
            <person name="Zaveri J.S."/>
            <person name="Zhan M."/>
            <person name="Zhang G."/>
            <person name="Zhao Q."/>
            <person name="Zheng L."/>
            <person name="Zheng X.H."/>
            <person name="Zhong F.N."/>
            <person name="Zhong W."/>
            <person name="Zhou X."/>
            <person name="Zhu S.C."/>
            <person name="Zhu X."/>
            <person name="Smith H.O."/>
            <person name="Gibbs R.A."/>
            <person name="Myers E.W."/>
            <person name="Rubin G.M."/>
            <person name="Venter J.C."/>
        </authorList>
    </citation>
    <scope>NUCLEOTIDE SEQUENCE [LARGE SCALE GENOMIC DNA]</scope>
    <source>
        <strain>Berkeley</strain>
    </source>
</reference>
<reference key="2">
    <citation type="journal article" date="2002" name="Genome Biol.">
        <title>Annotation of the Drosophila melanogaster euchromatic genome: a systematic review.</title>
        <authorList>
            <person name="Misra S."/>
            <person name="Crosby M.A."/>
            <person name="Mungall C.J."/>
            <person name="Matthews B.B."/>
            <person name="Campbell K.S."/>
            <person name="Hradecky P."/>
            <person name="Huang Y."/>
            <person name="Kaminker J.S."/>
            <person name="Millburn G.H."/>
            <person name="Prochnik S.E."/>
            <person name="Smith C.D."/>
            <person name="Tupy J.L."/>
            <person name="Whitfield E.J."/>
            <person name="Bayraktaroglu L."/>
            <person name="Berman B.P."/>
            <person name="Bettencourt B.R."/>
            <person name="Celniker S.E."/>
            <person name="de Grey A.D.N.J."/>
            <person name="Drysdale R.A."/>
            <person name="Harris N.L."/>
            <person name="Richter J."/>
            <person name="Russo S."/>
            <person name="Schroeder A.J."/>
            <person name="Shu S.Q."/>
            <person name="Stapleton M."/>
            <person name="Yamada C."/>
            <person name="Ashburner M."/>
            <person name="Gelbart W.M."/>
            <person name="Rubin G.M."/>
            <person name="Lewis S.E."/>
        </authorList>
    </citation>
    <scope>GENOME REANNOTATION</scope>
    <source>
        <strain>Berkeley</strain>
    </source>
</reference>
<reference key="3">
    <citation type="journal article" date="2001" name="Curr. Biol.">
        <title>Spatially restricted expression of candidate taste receptors in the Drosophila gustatory system.</title>
        <authorList>
            <person name="Dunipace L."/>
            <person name="Meister S."/>
            <person name="McNealy C."/>
            <person name="Amrein H."/>
        </authorList>
    </citation>
    <scope>IDENTIFICATION</scope>
</reference>
<reference key="4">
    <citation type="journal article" date="2003" name="Proc. Natl. Acad. Sci. U.S.A.">
        <title>Molecular evolution of the insect chemoreceptor gene superfamily in Drosophila melanogaster.</title>
        <authorList>
            <person name="Robertson H.M."/>
            <person name="Warr C.G."/>
            <person name="Carlson J.R."/>
        </authorList>
    </citation>
    <scope>PREDICTION OF FUNCTION</scope>
</reference>
<reference key="5">
    <citation type="journal article" date="2007" name="Proc. Natl. Acad. Sci. U.S.A.">
        <title>A Drosophila gustatory receptor required for the responses to sucrose, glucose, and maltose identified by mRNA tagging.</title>
        <authorList>
            <person name="Jiao Y."/>
            <person name="Moon S.J."/>
            <person name="Montell C."/>
        </authorList>
    </citation>
    <scope>FUNCTION</scope>
    <scope>TISSUE SPECIFICITY</scope>
</reference>
<reference key="6">
    <citation type="journal article" date="2008" name="Curr. Biol.">
        <title>Gr64f is required in combination with other gustatory receptors for sugar detection in Drosophila.</title>
        <authorList>
            <person name="Jiao Y."/>
            <person name="Moon S.J."/>
            <person name="Wang X."/>
            <person name="Ren Q."/>
            <person name="Montell C."/>
        </authorList>
    </citation>
    <scope>FUNCTION</scope>
</reference>
<reference key="7">
    <citation type="journal article" date="2013" name="Curr. Biol.">
        <title>The molecular basis of sugar sensing in Drosophila larvae.</title>
        <authorList>
            <person name="Mishra D."/>
            <person name="Miyamoto T."/>
            <person name="Rezenom Y.H."/>
            <person name="Broussard A."/>
            <person name="Yavuz A."/>
            <person name="Slone J."/>
            <person name="Russell D.H."/>
            <person name="Amrein H."/>
        </authorList>
    </citation>
    <scope>FUNCTION</scope>
</reference>
<reference key="8">
    <citation type="journal article" date="2013" name="PLoS ONE">
        <title>Identification of a Drosophila glucose receptor using Ca2+ imaging of single chemosensory neurons.</title>
        <authorList>
            <person name="Miyamoto T."/>
            <person name="Chen Y."/>
            <person name="Slone J."/>
            <person name="Amrein H."/>
        </authorList>
    </citation>
    <scope>FUNCTION</scope>
    <scope>TISSUE SPECIFICITY</scope>
</reference>
<feature type="chain" id="PRO_0000216533" description="Gustatory receptor for sugar taste 64f">
    <location>
        <begin position="1"/>
        <end position="469"/>
    </location>
</feature>
<feature type="topological domain" description="Cytoplasmic" evidence="1">
    <location>
        <begin position="1"/>
        <end position="117"/>
    </location>
</feature>
<feature type="transmembrane region" description="Helical; Name=1" evidence="2">
    <location>
        <begin position="118"/>
        <end position="138"/>
    </location>
</feature>
<feature type="topological domain" description="Extracellular" evidence="1">
    <location>
        <begin position="139"/>
        <end position="146"/>
    </location>
</feature>
<feature type="transmembrane region" description="Helical; Name=2" evidence="2">
    <location>
        <begin position="147"/>
        <end position="167"/>
    </location>
</feature>
<feature type="topological domain" description="Cytoplasmic" evidence="1">
    <location>
        <begin position="168"/>
        <end position="199"/>
    </location>
</feature>
<feature type="transmembrane region" description="Helical; Name=3" evidence="2">
    <location>
        <begin position="200"/>
        <end position="220"/>
    </location>
</feature>
<feature type="topological domain" description="Extracellular" evidence="1">
    <location>
        <begin position="221"/>
        <end position="265"/>
    </location>
</feature>
<feature type="transmembrane region" description="Helical; Name=4" evidence="2">
    <location>
        <begin position="266"/>
        <end position="286"/>
    </location>
</feature>
<feature type="topological domain" description="Cytoplasmic" evidence="1">
    <location>
        <begin position="287"/>
        <end position="330"/>
    </location>
</feature>
<feature type="transmembrane region" description="Helical; Name=5" evidence="2">
    <location>
        <begin position="331"/>
        <end position="351"/>
    </location>
</feature>
<feature type="topological domain" description="Extracellular" evidence="1">
    <location>
        <begin position="352"/>
        <end position="353"/>
    </location>
</feature>
<feature type="transmembrane region" description="Helical; Name=6" evidence="2">
    <location>
        <begin position="354"/>
        <end position="374"/>
    </location>
</feature>
<feature type="topological domain" description="Cytoplasmic" evidence="1">
    <location>
        <begin position="375"/>
        <end position="435"/>
    </location>
</feature>
<feature type="transmembrane region" description="Helical; Name=7" evidence="2">
    <location>
        <begin position="436"/>
        <end position="456"/>
    </location>
</feature>
<feature type="topological domain" description="Extracellular" evidence="1">
    <location>
        <begin position="457"/>
        <end position="469"/>
    </location>
</feature>
<feature type="glycosylation site" description="N-linked (GlcNAc...) asparagine" evidence="2">
    <location>
        <position position="230"/>
    </location>
</feature>
<gene>
    <name type="primary">Gr64f</name>
    <name type="ORF">CG32255</name>
</gene>
<name>GR64F_DROME</name>
<comment type="function">
    <text evidence="3 4 5 6">One of the few identified sugar gustatory receptors identified so far and which promotes the starvation-induced increase of feeding motivation. Required in combination with Gr64a to detect sucrose, maltose, and glucose.</text>
</comment>
<comment type="subcellular location">
    <subcellularLocation>
        <location evidence="1">Cell membrane</location>
        <topology evidence="1">Multi-pass membrane protein</topology>
    </subcellularLocation>
</comment>
<comment type="tissue specificity">
    <text evidence="3 5">Expressed in Gr5a-expressing sugar-sensing cells.</text>
</comment>
<comment type="similarity">
    <text evidence="7">Belongs to the insect chemoreceptor superfamily. Gustatory receptor (GR) family. Gr5a subfamily.</text>
</comment>